<accession>Q751L8</accession>
<keyword id="KW-0049">Antioxidant</keyword>
<keyword id="KW-0186">Copper</keyword>
<keyword id="KW-0963">Cytoplasm</keyword>
<keyword id="KW-1015">Disulfide bond</keyword>
<keyword id="KW-0479">Metal-binding</keyword>
<keyword id="KW-0560">Oxidoreductase</keyword>
<keyword id="KW-1185">Reference proteome</keyword>
<keyword id="KW-0862">Zinc</keyword>
<dbReference type="EC" id="1.15.1.1" evidence="3"/>
<dbReference type="EMBL" id="AE016820">
    <property type="protein sequence ID" value="AAS54170.2"/>
    <property type="molecule type" value="Genomic_DNA"/>
</dbReference>
<dbReference type="RefSeq" id="NP_986346.2">
    <property type="nucleotide sequence ID" value="NM_211408.2"/>
</dbReference>
<dbReference type="SMR" id="Q751L8"/>
<dbReference type="FunCoup" id="Q751L8">
    <property type="interactions" value="815"/>
</dbReference>
<dbReference type="STRING" id="284811.Q751L8"/>
<dbReference type="EnsemblFungi" id="AAS54170">
    <property type="protein sequence ID" value="AAS54170"/>
    <property type="gene ID" value="AGOS_AGL321W"/>
</dbReference>
<dbReference type="GeneID" id="4622639"/>
<dbReference type="KEGG" id="ago:AGOS_AGL321W"/>
<dbReference type="eggNOG" id="KOG0441">
    <property type="taxonomic scope" value="Eukaryota"/>
</dbReference>
<dbReference type="HOGENOM" id="CLU_056632_4_1_1"/>
<dbReference type="InParanoid" id="Q751L8"/>
<dbReference type="OMA" id="AQRGFHI"/>
<dbReference type="OrthoDB" id="2015551at2759"/>
<dbReference type="Proteomes" id="UP000000591">
    <property type="component" value="Chromosome VII"/>
</dbReference>
<dbReference type="GO" id="GO:0005829">
    <property type="term" value="C:cytosol"/>
    <property type="evidence" value="ECO:0007669"/>
    <property type="project" value="EnsemblFungi"/>
</dbReference>
<dbReference type="GO" id="GO:0005758">
    <property type="term" value="C:mitochondrial intermembrane space"/>
    <property type="evidence" value="ECO:0007669"/>
    <property type="project" value="EnsemblFungi"/>
</dbReference>
<dbReference type="GO" id="GO:0005634">
    <property type="term" value="C:nucleus"/>
    <property type="evidence" value="ECO:0007669"/>
    <property type="project" value="EnsemblFungi"/>
</dbReference>
<dbReference type="GO" id="GO:1902693">
    <property type="term" value="C:superoxide dismutase complex"/>
    <property type="evidence" value="ECO:0007669"/>
    <property type="project" value="EnsemblFungi"/>
</dbReference>
<dbReference type="GO" id="GO:0005507">
    <property type="term" value="F:copper ion binding"/>
    <property type="evidence" value="ECO:0000318"/>
    <property type="project" value="GO_Central"/>
</dbReference>
<dbReference type="GO" id="GO:0016670">
    <property type="term" value="F:oxidoreductase activity, acting on a sulfur group of donors, oxygen as acceptor"/>
    <property type="evidence" value="ECO:0007669"/>
    <property type="project" value="EnsemblFungi"/>
</dbReference>
<dbReference type="GO" id="GO:0004784">
    <property type="term" value="F:superoxide dismutase activity"/>
    <property type="evidence" value="ECO:0000318"/>
    <property type="project" value="GO_Central"/>
</dbReference>
<dbReference type="GO" id="GO:0045454">
    <property type="term" value="P:cell redox homeostasis"/>
    <property type="evidence" value="ECO:0007669"/>
    <property type="project" value="EnsemblFungi"/>
</dbReference>
<dbReference type="GO" id="GO:0006825">
    <property type="term" value="P:copper ion transport"/>
    <property type="evidence" value="ECO:0007669"/>
    <property type="project" value="EnsemblFungi"/>
</dbReference>
<dbReference type="GO" id="GO:0031505">
    <property type="term" value="P:fungal-type cell wall organization"/>
    <property type="evidence" value="ECO:0007669"/>
    <property type="project" value="EnsemblFungi"/>
</dbReference>
<dbReference type="GO" id="GO:0006878">
    <property type="term" value="P:intracellular copper ion homeostasis"/>
    <property type="evidence" value="ECO:0007669"/>
    <property type="project" value="EnsemblFungi"/>
</dbReference>
<dbReference type="GO" id="GO:0006882">
    <property type="term" value="P:intracellular zinc ion homeostasis"/>
    <property type="evidence" value="ECO:0007669"/>
    <property type="project" value="EnsemblFungi"/>
</dbReference>
<dbReference type="GO" id="GO:1901856">
    <property type="term" value="P:negative regulation of cellular respiration"/>
    <property type="evidence" value="ECO:0007669"/>
    <property type="project" value="EnsemblFungi"/>
</dbReference>
<dbReference type="GO" id="GO:0045944">
    <property type="term" value="P:positive regulation of transcription by RNA polymerase II"/>
    <property type="evidence" value="ECO:0007669"/>
    <property type="project" value="EnsemblFungi"/>
</dbReference>
<dbReference type="GO" id="GO:0050821">
    <property type="term" value="P:protein stabilization"/>
    <property type="evidence" value="ECO:0007669"/>
    <property type="project" value="EnsemblFungi"/>
</dbReference>
<dbReference type="GO" id="GO:0019430">
    <property type="term" value="P:removal of superoxide radicals"/>
    <property type="evidence" value="ECO:0000318"/>
    <property type="project" value="GO_Central"/>
</dbReference>
<dbReference type="CDD" id="cd00305">
    <property type="entry name" value="Cu-Zn_Superoxide_Dismutase"/>
    <property type="match status" value="1"/>
</dbReference>
<dbReference type="FunFam" id="2.60.40.200:FF:000001">
    <property type="entry name" value="Superoxide dismutase [Cu-Zn]"/>
    <property type="match status" value="1"/>
</dbReference>
<dbReference type="Gene3D" id="2.60.40.200">
    <property type="entry name" value="Superoxide dismutase, copper/zinc binding domain"/>
    <property type="match status" value="1"/>
</dbReference>
<dbReference type="InterPro" id="IPR036423">
    <property type="entry name" value="SOD-like_Cu/Zn_dom_sf"/>
</dbReference>
<dbReference type="InterPro" id="IPR024134">
    <property type="entry name" value="SOD_Cu/Zn_/chaperone"/>
</dbReference>
<dbReference type="InterPro" id="IPR018152">
    <property type="entry name" value="SOD_Cu/Zn_BS"/>
</dbReference>
<dbReference type="InterPro" id="IPR001424">
    <property type="entry name" value="SOD_Cu_Zn_dom"/>
</dbReference>
<dbReference type="PANTHER" id="PTHR10003">
    <property type="entry name" value="SUPEROXIDE DISMUTASE CU-ZN -RELATED"/>
    <property type="match status" value="1"/>
</dbReference>
<dbReference type="Pfam" id="PF00080">
    <property type="entry name" value="Sod_Cu"/>
    <property type="match status" value="1"/>
</dbReference>
<dbReference type="PRINTS" id="PR00068">
    <property type="entry name" value="CUZNDISMTASE"/>
</dbReference>
<dbReference type="SUPFAM" id="SSF49329">
    <property type="entry name" value="Cu,Zn superoxide dismutase-like"/>
    <property type="match status" value="1"/>
</dbReference>
<dbReference type="PROSITE" id="PS00087">
    <property type="entry name" value="SOD_CU_ZN_1"/>
    <property type="match status" value="1"/>
</dbReference>
<dbReference type="PROSITE" id="PS00332">
    <property type="entry name" value="SOD_CU_ZN_2"/>
    <property type="match status" value="1"/>
</dbReference>
<organism>
    <name type="scientific">Eremothecium gossypii (strain ATCC 10895 / CBS 109.51 / FGSC 9923 / NRRL Y-1056)</name>
    <name type="common">Yeast</name>
    <name type="synonym">Ashbya gossypii</name>
    <dbReference type="NCBI Taxonomy" id="284811"/>
    <lineage>
        <taxon>Eukaryota</taxon>
        <taxon>Fungi</taxon>
        <taxon>Dikarya</taxon>
        <taxon>Ascomycota</taxon>
        <taxon>Saccharomycotina</taxon>
        <taxon>Saccharomycetes</taxon>
        <taxon>Saccharomycetales</taxon>
        <taxon>Saccharomycetaceae</taxon>
        <taxon>Eremothecium</taxon>
    </lineage>
</organism>
<reference key="1">
    <citation type="journal article" date="2004" name="Science">
        <title>The Ashbya gossypii genome as a tool for mapping the ancient Saccharomyces cerevisiae genome.</title>
        <authorList>
            <person name="Dietrich F.S."/>
            <person name="Voegeli S."/>
            <person name="Brachat S."/>
            <person name="Lerch A."/>
            <person name="Gates K."/>
            <person name="Steiner S."/>
            <person name="Mohr C."/>
            <person name="Poehlmann R."/>
            <person name="Luedi P."/>
            <person name="Choi S."/>
            <person name="Wing R.A."/>
            <person name="Flavier A."/>
            <person name="Gaffney T.D."/>
            <person name="Philippsen P."/>
        </authorList>
    </citation>
    <scope>NUCLEOTIDE SEQUENCE [LARGE SCALE GENOMIC DNA]</scope>
    <source>
        <strain>ATCC 10895 / CBS 109.51 / FGSC 9923 / NRRL Y-1056</strain>
    </source>
</reference>
<reference key="2">
    <citation type="journal article" date="2013" name="G3 (Bethesda)">
        <title>Genomes of Ashbya fungi isolated from insects reveal four mating-type loci, numerous translocations, lack of transposons, and distinct gene duplications.</title>
        <authorList>
            <person name="Dietrich F.S."/>
            <person name="Voegeli S."/>
            <person name="Kuo S."/>
            <person name="Philippsen P."/>
        </authorList>
    </citation>
    <scope>GENOME REANNOTATION</scope>
    <scope>SEQUENCE REVISION TO 5</scope>
    <source>
        <strain>ATCC 10895 / CBS 109.51 / FGSC 9923 / NRRL Y-1056</strain>
    </source>
</reference>
<feature type="initiator methionine" description="Removed" evidence="2">
    <location>
        <position position="1"/>
    </location>
</feature>
<feature type="chain" id="PRO_0000164106" description="Superoxide dismutase [Cu-Zn]">
    <location>
        <begin position="2"/>
        <end position="154"/>
    </location>
</feature>
<feature type="binding site" evidence="2">
    <location>
        <position position="47"/>
    </location>
    <ligand>
        <name>Cu cation</name>
        <dbReference type="ChEBI" id="CHEBI:23378"/>
        <note>catalytic</note>
    </ligand>
</feature>
<feature type="binding site" evidence="2">
    <location>
        <position position="49"/>
    </location>
    <ligand>
        <name>Cu cation</name>
        <dbReference type="ChEBI" id="CHEBI:23378"/>
        <note>catalytic</note>
    </ligand>
</feature>
<feature type="binding site" evidence="2">
    <location>
        <position position="64"/>
    </location>
    <ligand>
        <name>Cu cation</name>
        <dbReference type="ChEBI" id="CHEBI:23378"/>
        <note>catalytic</note>
    </ligand>
</feature>
<feature type="binding site" evidence="2">
    <location>
        <position position="64"/>
    </location>
    <ligand>
        <name>Zn(2+)</name>
        <dbReference type="ChEBI" id="CHEBI:29105"/>
        <note>structural</note>
    </ligand>
</feature>
<feature type="binding site" evidence="2">
    <location>
        <position position="72"/>
    </location>
    <ligand>
        <name>Zn(2+)</name>
        <dbReference type="ChEBI" id="CHEBI:29105"/>
        <note>structural</note>
    </ligand>
</feature>
<feature type="binding site" evidence="2">
    <location>
        <position position="81"/>
    </location>
    <ligand>
        <name>Zn(2+)</name>
        <dbReference type="ChEBI" id="CHEBI:29105"/>
        <note>structural</note>
    </ligand>
</feature>
<feature type="binding site" evidence="2">
    <location>
        <position position="84"/>
    </location>
    <ligand>
        <name>Zn(2+)</name>
        <dbReference type="ChEBI" id="CHEBI:29105"/>
        <note>structural</note>
    </ligand>
</feature>
<feature type="binding site" evidence="2">
    <location>
        <position position="121"/>
    </location>
    <ligand>
        <name>Cu cation</name>
        <dbReference type="ChEBI" id="CHEBI:23378"/>
        <note>catalytic</note>
    </ligand>
</feature>
<feature type="binding site" evidence="2">
    <location>
        <position position="144"/>
    </location>
    <ligand>
        <name>substrate</name>
    </ligand>
</feature>
<feature type="disulfide bond" evidence="2">
    <location>
        <begin position="58"/>
        <end position="147"/>
    </location>
</feature>
<name>SODC_EREGS</name>
<gene>
    <name type="primary">SOD1</name>
    <name type="ordered locus">AGL321W</name>
</gene>
<evidence type="ECO:0000250" key="1">
    <source>
        <dbReference type="UniProtKB" id="P00442"/>
    </source>
</evidence>
<evidence type="ECO:0000250" key="2">
    <source>
        <dbReference type="UniProtKB" id="P00445"/>
    </source>
</evidence>
<evidence type="ECO:0000250" key="3">
    <source>
        <dbReference type="UniProtKB" id="P85978"/>
    </source>
</evidence>
<evidence type="ECO:0000305" key="4"/>
<proteinExistence type="inferred from homology"/>
<protein>
    <recommendedName>
        <fullName>Superoxide dismutase [Cu-Zn]</fullName>
        <ecNumber evidence="3">1.15.1.1</ecNumber>
    </recommendedName>
</protein>
<comment type="function">
    <text evidence="1">Destroys radicals which are normally produced within the cells and which are toxic to biological systems.</text>
</comment>
<comment type="catalytic activity">
    <reaction evidence="3">
        <text>2 superoxide + 2 H(+) = H2O2 + O2</text>
        <dbReference type="Rhea" id="RHEA:20696"/>
        <dbReference type="ChEBI" id="CHEBI:15378"/>
        <dbReference type="ChEBI" id="CHEBI:15379"/>
        <dbReference type="ChEBI" id="CHEBI:16240"/>
        <dbReference type="ChEBI" id="CHEBI:18421"/>
        <dbReference type="EC" id="1.15.1.1"/>
    </reaction>
</comment>
<comment type="cofactor">
    <cofactor evidence="2">
        <name>Cu cation</name>
        <dbReference type="ChEBI" id="CHEBI:23378"/>
    </cofactor>
    <text evidence="2">Binds 1 copper ion per subunit.</text>
</comment>
<comment type="cofactor">
    <cofactor evidence="2">
        <name>Zn(2+)</name>
        <dbReference type="ChEBI" id="CHEBI:29105"/>
    </cofactor>
    <text evidence="2">Binds 1 zinc ion per subunit.</text>
</comment>
<comment type="subunit">
    <text evidence="3">Homodimer.</text>
</comment>
<comment type="subcellular location">
    <subcellularLocation>
        <location evidence="2">Cytoplasm</location>
    </subcellularLocation>
</comment>
<comment type="similarity">
    <text evidence="4">Belongs to the Cu-Zn superoxide dismutase family.</text>
</comment>
<sequence>MVKAIAVLKGDAGVSGVVHFEQEADAAVTTISWNITGFEPNTEHGFHIHEFGDVTNGCTSSGSHFNPFKKTHGSPEDENRHVGDMGNVLADANGVAVGSAKDPLIKIFGPTSILGRTVVVHAGKDDLGRGGNEESLKTGNAGPRPACGVIGIAN</sequence>